<accession>P0A1Z8</accession>
<accession>P55227</accession>
<evidence type="ECO:0000250" key="1"/>
<evidence type="ECO:0000255" key="2"/>
<evidence type="ECO:0000305" key="3"/>
<sequence>MHTLLLLAALSNQITFTTTQQGDIYTVIPQVTLNEPCVCQVQILSVRDGVGGQSHTQQKQTLSLPANQPIELSRLSVNISSEDSVKIIVTVSDGQSLHLSQQWPPSAQ</sequence>
<name>CSGC_SALTY</name>
<reference key="1">
    <citation type="journal article" date="1998" name="J. Bacteriol.">
        <title>Curli fibers are highly conserved between Salmonella typhimurium and Escherichia coli with respect to operon structure and regulation.</title>
        <authorList>
            <person name="Romling U."/>
            <person name="Bian Z."/>
            <person name="Hammar M."/>
            <person name="Sierralta W.D."/>
            <person name="Normark S."/>
        </authorList>
    </citation>
    <scope>NUCLEOTIDE SEQUENCE [GENOMIC DNA]</scope>
    <source>
        <strain>SR-11</strain>
    </source>
</reference>
<reference key="2">
    <citation type="journal article" date="2001" name="Nature">
        <title>Complete genome sequence of Salmonella enterica serovar Typhimurium LT2.</title>
        <authorList>
            <person name="McClelland M."/>
            <person name="Sanderson K.E."/>
            <person name="Spieth J."/>
            <person name="Clifton S.W."/>
            <person name="Latreille P."/>
            <person name="Courtney L."/>
            <person name="Porwollik S."/>
            <person name="Ali J."/>
            <person name="Dante M."/>
            <person name="Du F."/>
            <person name="Hou S."/>
            <person name="Layman D."/>
            <person name="Leonard S."/>
            <person name="Nguyen C."/>
            <person name="Scott K."/>
            <person name="Holmes A."/>
            <person name="Grewal N."/>
            <person name="Mulvaney E."/>
            <person name="Ryan E."/>
            <person name="Sun H."/>
            <person name="Florea L."/>
            <person name="Miller W."/>
            <person name="Stoneking T."/>
            <person name="Nhan M."/>
            <person name="Waterston R."/>
            <person name="Wilson R.K."/>
        </authorList>
    </citation>
    <scope>NUCLEOTIDE SEQUENCE [LARGE SCALE GENOMIC DNA]</scope>
    <source>
        <strain>LT2 / SGSC1412 / ATCC 700720</strain>
    </source>
</reference>
<proteinExistence type="inferred from homology"/>
<feature type="signal peptide" evidence="2">
    <location>
        <begin position="1"/>
        <end position="8"/>
    </location>
</feature>
<feature type="chain" id="PRO_0000021015" description="Curli assembly protein CsgC">
    <location>
        <begin position="9"/>
        <end position="108"/>
    </location>
</feature>
<gene>
    <name type="primary">csgC</name>
    <name type="synonym">agfC</name>
    <name type="ordered locus">STM1145</name>
</gene>
<comment type="function">
    <text evidence="1">Plays a role in the extracellular assembly of CsgA into thin aggregative fimbriae (Tafi) fibers. Assembly may also require CsgE. Tafi are thought to be assembled via an extracellular nucleation-precipitation (ENP) pathway, and possibly also via an intracellular non-CsgC-dependent pathway (By similarity).</text>
</comment>
<comment type="subcellular location">
    <subcellularLocation>
        <location evidence="1">Periplasm</location>
    </subcellularLocation>
</comment>
<comment type="similarity">
    <text evidence="3">Belongs to the CsgC/AgfC family.</text>
</comment>
<keyword id="KW-0143">Chaperone</keyword>
<keyword id="KW-0574">Periplasm</keyword>
<keyword id="KW-1185">Reference proteome</keyword>
<keyword id="KW-0732">Signal</keyword>
<organism>
    <name type="scientific">Salmonella typhimurium (strain LT2 / SGSC1412 / ATCC 700720)</name>
    <dbReference type="NCBI Taxonomy" id="99287"/>
    <lineage>
        <taxon>Bacteria</taxon>
        <taxon>Pseudomonadati</taxon>
        <taxon>Pseudomonadota</taxon>
        <taxon>Gammaproteobacteria</taxon>
        <taxon>Enterobacterales</taxon>
        <taxon>Enterobacteriaceae</taxon>
        <taxon>Salmonella</taxon>
    </lineage>
</organism>
<protein>
    <recommendedName>
        <fullName>Curli assembly protein CsgC</fullName>
    </recommendedName>
</protein>
<dbReference type="EMBL" id="AJ002301">
    <property type="protein sequence ID" value="CAA05318.1"/>
    <property type="molecule type" value="Genomic_DNA"/>
</dbReference>
<dbReference type="EMBL" id="AE006468">
    <property type="protein sequence ID" value="AAL20075.1"/>
    <property type="molecule type" value="Genomic_DNA"/>
</dbReference>
<dbReference type="RefSeq" id="NP_460116.1">
    <property type="nucleotide sequence ID" value="NC_003197.2"/>
</dbReference>
<dbReference type="RefSeq" id="WP_000557256.1">
    <property type="nucleotide sequence ID" value="NC_003197.2"/>
</dbReference>
<dbReference type="SMR" id="P0A1Z8"/>
<dbReference type="STRING" id="99287.STM1145"/>
<dbReference type="PaxDb" id="99287-STM1145"/>
<dbReference type="GeneID" id="1252663"/>
<dbReference type="KEGG" id="stm:STM1145"/>
<dbReference type="PATRIC" id="fig|99287.12.peg.1212"/>
<dbReference type="HOGENOM" id="CLU_152585_0_0_6"/>
<dbReference type="OMA" id="SNQLWFD"/>
<dbReference type="PhylomeDB" id="P0A1Z8"/>
<dbReference type="BioCyc" id="SENT99287:STM1145-MONOMER"/>
<dbReference type="Proteomes" id="UP000001014">
    <property type="component" value="Chromosome"/>
</dbReference>
<dbReference type="GO" id="GO:0042597">
    <property type="term" value="C:periplasmic space"/>
    <property type="evidence" value="ECO:0007669"/>
    <property type="project" value="UniProtKB-SubCell"/>
</dbReference>
<dbReference type="Gene3D" id="2.60.40.2420">
    <property type="match status" value="1"/>
</dbReference>
<dbReference type="InterPro" id="IPR053722">
    <property type="entry name" value="Curli_assembly_CsgC/AgfC"/>
</dbReference>
<dbReference type="InterPro" id="IPR014491">
    <property type="entry name" value="Curli_production_prot_CsgC"/>
</dbReference>
<dbReference type="NCBIfam" id="NF007507">
    <property type="entry name" value="PRK10102.1"/>
    <property type="match status" value="1"/>
</dbReference>
<dbReference type="Pfam" id="PF10610">
    <property type="entry name" value="Tafi-CsgC"/>
    <property type="match status" value="1"/>
</dbReference>
<dbReference type="PIRSF" id="PIRSF018100">
    <property type="entry name" value="CsgC"/>
    <property type="match status" value="1"/>
</dbReference>